<name>PSBL_GUITH</name>
<sequence length="38" mass="4375">MSGPNPNKQPVELNRTSLFWGLLLIFILAVLFSSYFFN</sequence>
<reference key="1">
    <citation type="journal article" date="1999" name="J. Mol. Evol.">
        <title>The plastid genome of the cryptophyte alga, Guillardia theta: complete sequence and conserved synteny groups confirm its common ancestry with red algae.</title>
        <authorList>
            <person name="Douglas S.E."/>
            <person name="Penny S.L."/>
        </authorList>
    </citation>
    <scope>NUCLEOTIDE SEQUENCE [LARGE SCALE GENOMIC DNA]</scope>
</reference>
<geneLocation type="chloroplast"/>
<dbReference type="EMBL" id="AF041468">
    <property type="protein sequence ID" value="AAC35655.1"/>
    <property type="molecule type" value="Genomic_DNA"/>
</dbReference>
<dbReference type="RefSeq" id="NP_050721.1">
    <property type="nucleotide sequence ID" value="NC_000926.1"/>
</dbReference>
<dbReference type="SMR" id="O78464"/>
<dbReference type="GeneID" id="857024"/>
<dbReference type="HOGENOM" id="CLU_214425_0_0_1"/>
<dbReference type="GO" id="GO:0009535">
    <property type="term" value="C:chloroplast thylakoid membrane"/>
    <property type="evidence" value="ECO:0007669"/>
    <property type="project" value="UniProtKB-SubCell"/>
</dbReference>
<dbReference type="GO" id="GO:0009539">
    <property type="term" value="C:photosystem II reaction center"/>
    <property type="evidence" value="ECO:0007669"/>
    <property type="project" value="InterPro"/>
</dbReference>
<dbReference type="GO" id="GO:0015979">
    <property type="term" value="P:photosynthesis"/>
    <property type="evidence" value="ECO:0007669"/>
    <property type="project" value="UniProtKB-UniRule"/>
</dbReference>
<dbReference type="HAMAP" id="MF_01317">
    <property type="entry name" value="PSII_PsbL"/>
    <property type="match status" value="1"/>
</dbReference>
<dbReference type="InterPro" id="IPR003372">
    <property type="entry name" value="PSII_PsbL"/>
</dbReference>
<dbReference type="InterPro" id="IPR037266">
    <property type="entry name" value="PSII_PsbL_sf"/>
</dbReference>
<dbReference type="NCBIfam" id="NF001972">
    <property type="entry name" value="PRK00753.1"/>
    <property type="match status" value="1"/>
</dbReference>
<dbReference type="Pfam" id="PF02419">
    <property type="entry name" value="PsbL"/>
    <property type="match status" value="1"/>
</dbReference>
<dbReference type="SUPFAM" id="SSF161017">
    <property type="entry name" value="Photosystem II reaction center protein L, PsbL"/>
    <property type="match status" value="1"/>
</dbReference>
<gene>
    <name evidence="1" type="primary">psbL</name>
</gene>
<proteinExistence type="inferred from homology"/>
<feature type="chain" id="PRO_0000219717" description="Photosystem II reaction center protein L">
    <location>
        <begin position="1"/>
        <end position="38"/>
    </location>
</feature>
<feature type="transmembrane region" description="Helical" evidence="1">
    <location>
        <begin position="17"/>
        <end position="37"/>
    </location>
</feature>
<keyword id="KW-0150">Chloroplast</keyword>
<keyword id="KW-0472">Membrane</keyword>
<keyword id="KW-0602">Photosynthesis</keyword>
<keyword id="KW-0604">Photosystem II</keyword>
<keyword id="KW-0934">Plastid</keyword>
<keyword id="KW-0674">Reaction center</keyword>
<keyword id="KW-0793">Thylakoid</keyword>
<keyword id="KW-0812">Transmembrane</keyword>
<keyword id="KW-1133">Transmembrane helix</keyword>
<organism>
    <name type="scientific">Guillardia theta</name>
    <name type="common">Cryptophyte</name>
    <name type="synonym">Cryptomonas phi</name>
    <dbReference type="NCBI Taxonomy" id="55529"/>
    <lineage>
        <taxon>Eukaryota</taxon>
        <taxon>Cryptophyceae</taxon>
        <taxon>Pyrenomonadales</taxon>
        <taxon>Geminigeraceae</taxon>
        <taxon>Guillardia</taxon>
    </lineage>
</organism>
<accession>O78464</accession>
<comment type="function">
    <text evidence="1">One of the components of the core complex of photosystem II (PSII). PSII is a light-driven water:plastoquinone oxidoreductase that uses light energy to abstract electrons from H(2)O, generating O(2) and a proton gradient subsequently used for ATP formation. It consists of a core antenna complex that captures photons, and an electron transfer chain that converts photonic excitation into a charge separation. This subunit is found at the monomer-monomer interface and is required for correct PSII assembly and/or dimerization.</text>
</comment>
<comment type="subunit">
    <text evidence="1">PSII is composed of 1 copy each of membrane proteins PsbA, PsbB, PsbC, PsbD, PsbE, PsbF, PsbH, PsbI, PsbJ, PsbK, PsbL, PsbM, PsbT, PsbX, PsbY, PsbZ, Psb30/Ycf12, at least 3 peripheral proteins of the oxygen-evolving complex and a large number of cofactors. It forms dimeric complexes.</text>
</comment>
<comment type="subcellular location">
    <subcellularLocation>
        <location evidence="1">Plastid</location>
        <location evidence="1">Chloroplast thylakoid membrane</location>
        <topology evidence="1">Single-pass membrane protein</topology>
    </subcellularLocation>
</comment>
<comment type="similarity">
    <text evidence="1">Belongs to the PsbL family.</text>
</comment>
<evidence type="ECO:0000255" key="1">
    <source>
        <dbReference type="HAMAP-Rule" id="MF_01317"/>
    </source>
</evidence>
<protein>
    <recommendedName>
        <fullName evidence="1">Photosystem II reaction center protein L</fullName>
        <shortName evidence="1">PSII-L</shortName>
    </recommendedName>
</protein>